<proteinExistence type="inferred from homology"/>
<protein>
    <recommendedName>
        <fullName evidence="1">DNA polymerase IV</fullName>
        <shortName evidence="1">Pol IV</shortName>
        <ecNumber evidence="1">2.7.7.7</ecNumber>
    </recommendedName>
</protein>
<gene>
    <name evidence="1" type="primary">dinB</name>
    <name type="ordered locus">YPA_2721</name>
</gene>
<name>DPO4_YERPA</name>
<comment type="function">
    <text evidence="1">Poorly processive, error-prone DNA polymerase involved in untargeted mutagenesis. Copies undamaged DNA at stalled replication forks, which arise in vivo from mismatched or misaligned primer ends. These misaligned primers can be extended by PolIV. Exhibits no 3'-5' exonuclease (proofreading) activity. May be involved in translesional synthesis, in conjunction with the beta clamp from PolIII.</text>
</comment>
<comment type="catalytic activity">
    <reaction evidence="1">
        <text>DNA(n) + a 2'-deoxyribonucleoside 5'-triphosphate = DNA(n+1) + diphosphate</text>
        <dbReference type="Rhea" id="RHEA:22508"/>
        <dbReference type="Rhea" id="RHEA-COMP:17339"/>
        <dbReference type="Rhea" id="RHEA-COMP:17340"/>
        <dbReference type="ChEBI" id="CHEBI:33019"/>
        <dbReference type="ChEBI" id="CHEBI:61560"/>
        <dbReference type="ChEBI" id="CHEBI:173112"/>
        <dbReference type="EC" id="2.7.7.7"/>
    </reaction>
</comment>
<comment type="cofactor">
    <cofactor evidence="1">
        <name>Mg(2+)</name>
        <dbReference type="ChEBI" id="CHEBI:18420"/>
    </cofactor>
    <text evidence="1">Binds 2 magnesium ions per subunit.</text>
</comment>
<comment type="subunit">
    <text evidence="1">Monomer.</text>
</comment>
<comment type="subcellular location">
    <subcellularLocation>
        <location evidence="1">Cytoplasm</location>
    </subcellularLocation>
</comment>
<comment type="similarity">
    <text evidence="1">Belongs to the DNA polymerase type-Y family.</text>
</comment>
<organism>
    <name type="scientific">Yersinia pestis bv. Antiqua (strain Antiqua)</name>
    <dbReference type="NCBI Taxonomy" id="360102"/>
    <lineage>
        <taxon>Bacteria</taxon>
        <taxon>Pseudomonadati</taxon>
        <taxon>Pseudomonadota</taxon>
        <taxon>Gammaproteobacteria</taxon>
        <taxon>Enterobacterales</taxon>
        <taxon>Yersiniaceae</taxon>
        <taxon>Yersinia</taxon>
    </lineage>
</organism>
<dbReference type="EC" id="2.7.7.7" evidence="1"/>
<dbReference type="EMBL" id="CP000308">
    <property type="protein sequence ID" value="ABG14683.1"/>
    <property type="molecule type" value="Genomic_DNA"/>
</dbReference>
<dbReference type="RefSeq" id="WP_002208708.1">
    <property type="nucleotide sequence ID" value="NZ_CP009906.1"/>
</dbReference>
<dbReference type="SMR" id="Q1C4D9"/>
<dbReference type="GeneID" id="57975488"/>
<dbReference type="KEGG" id="ypa:YPA_2721"/>
<dbReference type="Proteomes" id="UP000001971">
    <property type="component" value="Chromosome"/>
</dbReference>
<dbReference type="GO" id="GO:0005829">
    <property type="term" value="C:cytosol"/>
    <property type="evidence" value="ECO:0007669"/>
    <property type="project" value="TreeGrafter"/>
</dbReference>
<dbReference type="GO" id="GO:0003684">
    <property type="term" value="F:damaged DNA binding"/>
    <property type="evidence" value="ECO:0007669"/>
    <property type="project" value="InterPro"/>
</dbReference>
<dbReference type="GO" id="GO:0003887">
    <property type="term" value="F:DNA-directed DNA polymerase activity"/>
    <property type="evidence" value="ECO:0007669"/>
    <property type="project" value="UniProtKB-UniRule"/>
</dbReference>
<dbReference type="GO" id="GO:0000287">
    <property type="term" value="F:magnesium ion binding"/>
    <property type="evidence" value="ECO:0007669"/>
    <property type="project" value="UniProtKB-UniRule"/>
</dbReference>
<dbReference type="GO" id="GO:0006261">
    <property type="term" value="P:DNA-templated DNA replication"/>
    <property type="evidence" value="ECO:0007669"/>
    <property type="project" value="UniProtKB-UniRule"/>
</dbReference>
<dbReference type="GO" id="GO:0042276">
    <property type="term" value="P:error-prone translesion synthesis"/>
    <property type="evidence" value="ECO:0007669"/>
    <property type="project" value="TreeGrafter"/>
</dbReference>
<dbReference type="GO" id="GO:0009432">
    <property type="term" value="P:SOS response"/>
    <property type="evidence" value="ECO:0007669"/>
    <property type="project" value="TreeGrafter"/>
</dbReference>
<dbReference type="CDD" id="cd03586">
    <property type="entry name" value="PolY_Pol_IV_kappa"/>
    <property type="match status" value="1"/>
</dbReference>
<dbReference type="FunFam" id="1.10.150.20:FF:000019">
    <property type="entry name" value="DNA polymerase IV"/>
    <property type="match status" value="1"/>
</dbReference>
<dbReference type="FunFam" id="3.30.1490.100:FF:000002">
    <property type="entry name" value="DNA polymerase IV"/>
    <property type="match status" value="1"/>
</dbReference>
<dbReference type="FunFam" id="3.30.70.270:FF:000002">
    <property type="entry name" value="DNA polymerase IV"/>
    <property type="match status" value="1"/>
</dbReference>
<dbReference type="FunFam" id="3.40.1170.60:FF:000001">
    <property type="entry name" value="DNA polymerase IV"/>
    <property type="match status" value="1"/>
</dbReference>
<dbReference type="Gene3D" id="3.30.70.270">
    <property type="match status" value="1"/>
</dbReference>
<dbReference type="Gene3D" id="3.40.1170.60">
    <property type="match status" value="1"/>
</dbReference>
<dbReference type="Gene3D" id="1.10.150.20">
    <property type="entry name" value="5' to 3' exonuclease, C-terminal subdomain"/>
    <property type="match status" value="1"/>
</dbReference>
<dbReference type="Gene3D" id="3.30.1490.100">
    <property type="entry name" value="DNA polymerase, Y-family, little finger domain"/>
    <property type="match status" value="1"/>
</dbReference>
<dbReference type="HAMAP" id="MF_01113">
    <property type="entry name" value="DNApol_IV"/>
    <property type="match status" value="1"/>
</dbReference>
<dbReference type="InterPro" id="IPR043502">
    <property type="entry name" value="DNA/RNA_pol_sf"/>
</dbReference>
<dbReference type="InterPro" id="IPR036775">
    <property type="entry name" value="DNA_pol_Y-fam_lit_finger_sf"/>
</dbReference>
<dbReference type="InterPro" id="IPR017961">
    <property type="entry name" value="DNA_pol_Y-fam_little_finger"/>
</dbReference>
<dbReference type="InterPro" id="IPR050116">
    <property type="entry name" value="DNA_polymerase-Y"/>
</dbReference>
<dbReference type="InterPro" id="IPR022880">
    <property type="entry name" value="DNApol_IV"/>
</dbReference>
<dbReference type="InterPro" id="IPR053848">
    <property type="entry name" value="IMS_HHH_1"/>
</dbReference>
<dbReference type="InterPro" id="IPR043128">
    <property type="entry name" value="Rev_trsase/Diguanyl_cyclase"/>
</dbReference>
<dbReference type="InterPro" id="IPR001126">
    <property type="entry name" value="UmuC"/>
</dbReference>
<dbReference type="NCBIfam" id="NF002677">
    <property type="entry name" value="PRK02406.1"/>
    <property type="match status" value="1"/>
</dbReference>
<dbReference type="PANTHER" id="PTHR11076:SF33">
    <property type="entry name" value="DNA POLYMERASE KAPPA"/>
    <property type="match status" value="1"/>
</dbReference>
<dbReference type="PANTHER" id="PTHR11076">
    <property type="entry name" value="DNA REPAIR POLYMERASE UMUC / TRANSFERASE FAMILY MEMBER"/>
    <property type="match status" value="1"/>
</dbReference>
<dbReference type="Pfam" id="PF00817">
    <property type="entry name" value="IMS"/>
    <property type="match status" value="1"/>
</dbReference>
<dbReference type="Pfam" id="PF11799">
    <property type="entry name" value="IMS_C"/>
    <property type="match status" value="1"/>
</dbReference>
<dbReference type="Pfam" id="PF21999">
    <property type="entry name" value="IMS_HHH_1"/>
    <property type="match status" value="1"/>
</dbReference>
<dbReference type="SUPFAM" id="SSF56672">
    <property type="entry name" value="DNA/RNA polymerases"/>
    <property type="match status" value="1"/>
</dbReference>
<dbReference type="SUPFAM" id="SSF100879">
    <property type="entry name" value="Lesion bypass DNA polymerase (Y-family), little finger domain"/>
    <property type="match status" value="1"/>
</dbReference>
<dbReference type="PROSITE" id="PS50173">
    <property type="entry name" value="UMUC"/>
    <property type="match status" value="1"/>
</dbReference>
<keyword id="KW-0963">Cytoplasm</keyword>
<keyword id="KW-0227">DNA damage</keyword>
<keyword id="KW-0234">DNA repair</keyword>
<keyword id="KW-0235">DNA replication</keyword>
<keyword id="KW-0238">DNA-binding</keyword>
<keyword id="KW-0239">DNA-directed DNA polymerase</keyword>
<keyword id="KW-0460">Magnesium</keyword>
<keyword id="KW-0479">Metal-binding</keyword>
<keyword id="KW-0515">Mutator protein</keyword>
<keyword id="KW-0548">Nucleotidyltransferase</keyword>
<keyword id="KW-0808">Transferase</keyword>
<reference key="1">
    <citation type="journal article" date="2006" name="J. Bacteriol.">
        <title>Complete genome sequence of Yersinia pestis strains Antiqua and Nepal516: evidence of gene reduction in an emerging pathogen.</title>
        <authorList>
            <person name="Chain P.S.G."/>
            <person name="Hu P."/>
            <person name="Malfatti S.A."/>
            <person name="Radnedge L."/>
            <person name="Larimer F."/>
            <person name="Vergez L.M."/>
            <person name="Worsham P."/>
            <person name="Chu M.C."/>
            <person name="Andersen G.L."/>
        </authorList>
    </citation>
    <scope>NUCLEOTIDE SEQUENCE [LARGE SCALE GENOMIC DNA]</scope>
    <source>
        <strain>Antiqua</strain>
    </source>
</reference>
<sequence length="352" mass="39657">MRKIIHVDMDCFFAAVEMRDDPRLRDIPLAIGGSKERRGVISTANYPARRYGVRSAMPTAMAFKLCPQLTLLPGRMAAYKEASQHIREIFARYTPLIEPLSLDEAYLDVSDSLACGGSATLIAQEIRQSIASELNLTASAGIAPIKFLAKIASELNKPNGQYVITPNQIQPFLQDLPLSKIPGVGAVTAKRLQALGLVTCGDIQKYPLAELLKHFGKFGRVLWERSHGIDEREISPDRLRKSVGVEKTLAEDIYDWESCEALIEELYLELETRLRKVKPSLHIARQGVKLKFHDFQQTTQEHTWPVLNKVDLLEIAHAAWHERRAERGVRLVGLHVTLLDPQLERQLLLDWG</sequence>
<feature type="chain" id="PRO_1000084973" description="DNA polymerase IV">
    <location>
        <begin position="1"/>
        <end position="352"/>
    </location>
</feature>
<feature type="domain" description="UmuC" evidence="1">
    <location>
        <begin position="4"/>
        <end position="185"/>
    </location>
</feature>
<feature type="active site" evidence="1">
    <location>
        <position position="104"/>
    </location>
</feature>
<feature type="binding site" evidence="1">
    <location>
        <position position="8"/>
    </location>
    <ligand>
        <name>Mg(2+)</name>
        <dbReference type="ChEBI" id="CHEBI:18420"/>
    </ligand>
</feature>
<feature type="binding site" evidence="1">
    <location>
        <position position="103"/>
    </location>
    <ligand>
        <name>Mg(2+)</name>
        <dbReference type="ChEBI" id="CHEBI:18420"/>
    </ligand>
</feature>
<feature type="site" description="Substrate discrimination" evidence="1">
    <location>
        <position position="13"/>
    </location>
</feature>
<evidence type="ECO:0000255" key="1">
    <source>
        <dbReference type="HAMAP-Rule" id="MF_01113"/>
    </source>
</evidence>
<accession>Q1C4D9</accession>